<dbReference type="EMBL" id="CP001001">
    <property type="protein sequence ID" value="ACB24223.1"/>
    <property type="molecule type" value="Genomic_DNA"/>
</dbReference>
<dbReference type="RefSeq" id="WP_012319196.1">
    <property type="nucleotide sequence ID" value="NC_010505.1"/>
</dbReference>
<dbReference type="SMR" id="B1LWT6"/>
<dbReference type="STRING" id="426355.Mrad2831_2228"/>
<dbReference type="GeneID" id="6138260"/>
<dbReference type="KEGG" id="mrd:Mrad2831_2228"/>
<dbReference type="eggNOG" id="COG0468">
    <property type="taxonomic scope" value="Bacteria"/>
</dbReference>
<dbReference type="HOGENOM" id="CLU_040469_3_2_5"/>
<dbReference type="OrthoDB" id="9776733at2"/>
<dbReference type="Proteomes" id="UP000006589">
    <property type="component" value="Chromosome"/>
</dbReference>
<dbReference type="GO" id="GO:0005829">
    <property type="term" value="C:cytosol"/>
    <property type="evidence" value="ECO:0007669"/>
    <property type="project" value="TreeGrafter"/>
</dbReference>
<dbReference type="GO" id="GO:0005524">
    <property type="term" value="F:ATP binding"/>
    <property type="evidence" value="ECO:0007669"/>
    <property type="project" value="UniProtKB-UniRule"/>
</dbReference>
<dbReference type="GO" id="GO:0016887">
    <property type="term" value="F:ATP hydrolysis activity"/>
    <property type="evidence" value="ECO:0007669"/>
    <property type="project" value="InterPro"/>
</dbReference>
<dbReference type="GO" id="GO:0140664">
    <property type="term" value="F:ATP-dependent DNA damage sensor activity"/>
    <property type="evidence" value="ECO:0007669"/>
    <property type="project" value="InterPro"/>
</dbReference>
<dbReference type="GO" id="GO:0003684">
    <property type="term" value="F:damaged DNA binding"/>
    <property type="evidence" value="ECO:0007669"/>
    <property type="project" value="UniProtKB-UniRule"/>
</dbReference>
<dbReference type="GO" id="GO:0003697">
    <property type="term" value="F:single-stranded DNA binding"/>
    <property type="evidence" value="ECO:0007669"/>
    <property type="project" value="UniProtKB-UniRule"/>
</dbReference>
<dbReference type="GO" id="GO:0006310">
    <property type="term" value="P:DNA recombination"/>
    <property type="evidence" value="ECO:0007669"/>
    <property type="project" value="UniProtKB-UniRule"/>
</dbReference>
<dbReference type="GO" id="GO:0006281">
    <property type="term" value="P:DNA repair"/>
    <property type="evidence" value="ECO:0007669"/>
    <property type="project" value="UniProtKB-UniRule"/>
</dbReference>
<dbReference type="GO" id="GO:0009432">
    <property type="term" value="P:SOS response"/>
    <property type="evidence" value="ECO:0007669"/>
    <property type="project" value="UniProtKB-UniRule"/>
</dbReference>
<dbReference type="CDD" id="cd00983">
    <property type="entry name" value="RecA"/>
    <property type="match status" value="1"/>
</dbReference>
<dbReference type="FunFam" id="3.40.50.300:FF:000087">
    <property type="entry name" value="Recombinase RecA"/>
    <property type="match status" value="1"/>
</dbReference>
<dbReference type="Gene3D" id="3.40.50.300">
    <property type="entry name" value="P-loop containing nucleotide triphosphate hydrolases"/>
    <property type="match status" value="1"/>
</dbReference>
<dbReference type="HAMAP" id="MF_00268">
    <property type="entry name" value="RecA"/>
    <property type="match status" value="1"/>
</dbReference>
<dbReference type="InterPro" id="IPR003593">
    <property type="entry name" value="AAA+_ATPase"/>
</dbReference>
<dbReference type="InterPro" id="IPR013765">
    <property type="entry name" value="DNA_recomb/repair_RecA"/>
</dbReference>
<dbReference type="InterPro" id="IPR020584">
    <property type="entry name" value="DNA_recomb/repair_RecA_CS"/>
</dbReference>
<dbReference type="InterPro" id="IPR027417">
    <property type="entry name" value="P-loop_NTPase"/>
</dbReference>
<dbReference type="InterPro" id="IPR049261">
    <property type="entry name" value="RecA-like_C"/>
</dbReference>
<dbReference type="InterPro" id="IPR049428">
    <property type="entry name" value="RecA-like_N"/>
</dbReference>
<dbReference type="InterPro" id="IPR020588">
    <property type="entry name" value="RecA_ATP-bd"/>
</dbReference>
<dbReference type="InterPro" id="IPR023400">
    <property type="entry name" value="RecA_C_sf"/>
</dbReference>
<dbReference type="InterPro" id="IPR020587">
    <property type="entry name" value="RecA_monomer-monomer_interface"/>
</dbReference>
<dbReference type="NCBIfam" id="TIGR02012">
    <property type="entry name" value="tigrfam_recA"/>
    <property type="match status" value="1"/>
</dbReference>
<dbReference type="PANTHER" id="PTHR45900:SF1">
    <property type="entry name" value="MITOCHONDRIAL DNA REPAIR PROTEIN RECA HOMOLOG-RELATED"/>
    <property type="match status" value="1"/>
</dbReference>
<dbReference type="PANTHER" id="PTHR45900">
    <property type="entry name" value="RECA"/>
    <property type="match status" value="1"/>
</dbReference>
<dbReference type="Pfam" id="PF00154">
    <property type="entry name" value="RecA"/>
    <property type="match status" value="1"/>
</dbReference>
<dbReference type="Pfam" id="PF21096">
    <property type="entry name" value="RecA_C"/>
    <property type="match status" value="1"/>
</dbReference>
<dbReference type="PRINTS" id="PR00142">
    <property type="entry name" value="RECA"/>
</dbReference>
<dbReference type="SMART" id="SM00382">
    <property type="entry name" value="AAA"/>
    <property type="match status" value="1"/>
</dbReference>
<dbReference type="SUPFAM" id="SSF52540">
    <property type="entry name" value="P-loop containing nucleoside triphosphate hydrolases"/>
    <property type="match status" value="1"/>
</dbReference>
<dbReference type="SUPFAM" id="SSF54752">
    <property type="entry name" value="RecA protein, C-terminal domain"/>
    <property type="match status" value="1"/>
</dbReference>
<dbReference type="PROSITE" id="PS00321">
    <property type="entry name" value="RECA_1"/>
    <property type="match status" value="1"/>
</dbReference>
<dbReference type="PROSITE" id="PS50162">
    <property type="entry name" value="RECA_2"/>
    <property type="match status" value="1"/>
</dbReference>
<dbReference type="PROSITE" id="PS50163">
    <property type="entry name" value="RECA_3"/>
    <property type="match status" value="1"/>
</dbReference>
<accession>B1LWT6</accession>
<gene>
    <name evidence="1" type="primary">recA</name>
    <name type="ordered locus">Mrad2831_2228</name>
</gene>
<organism>
    <name type="scientific">Methylobacterium radiotolerans (strain ATCC 27329 / DSM 1819 / JCM 2831 / NBRC 15690 / NCIMB 10815 / 0-1)</name>
    <dbReference type="NCBI Taxonomy" id="426355"/>
    <lineage>
        <taxon>Bacteria</taxon>
        <taxon>Pseudomonadati</taxon>
        <taxon>Pseudomonadota</taxon>
        <taxon>Alphaproteobacteria</taxon>
        <taxon>Hyphomicrobiales</taxon>
        <taxon>Methylobacteriaceae</taxon>
        <taxon>Methylobacterium</taxon>
    </lineage>
</organism>
<name>RECA_METRJ</name>
<protein>
    <recommendedName>
        <fullName evidence="1">Protein RecA</fullName>
    </recommendedName>
    <alternativeName>
        <fullName evidence="1">Recombinase A</fullName>
    </alternativeName>
</protein>
<proteinExistence type="inferred from homology"/>
<keyword id="KW-0067">ATP-binding</keyword>
<keyword id="KW-0963">Cytoplasm</keyword>
<keyword id="KW-0227">DNA damage</keyword>
<keyword id="KW-0233">DNA recombination</keyword>
<keyword id="KW-0234">DNA repair</keyword>
<keyword id="KW-0238">DNA-binding</keyword>
<keyword id="KW-0547">Nucleotide-binding</keyword>
<keyword id="KW-0742">SOS response</keyword>
<feature type="chain" id="PRO_1000114346" description="Protein RecA">
    <location>
        <begin position="1"/>
        <end position="363"/>
    </location>
</feature>
<feature type="binding site" evidence="1">
    <location>
        <begin position="79"/>
        <end position="86"/>
    </location>
    <ligand>
        <name>ATP</name>
        <dbReference type="ChEBI" id="CHEBI:30616"/>
    </ligand>
</feature>
<sequence>MAQPALKVVDMPPVDKDKSKAIDAALSQIERAFGKGSIMRLGKSDKVQEVETVSTGSLGLDIALGVGGLPRGRVIEIYGPESSGKTTLALHTIAEAQKKGGVCAFVDAEHALDPVYARKLGVNLDDLLISQPDTGEQALEITDTLVRSGAIDVLVVDSVAALTPRAEIEGEMGESQPGLQARLMSQALRKLTGSISRSNCMVIFINQIRMKIGVMYGSPETTTGGNALKFYASVRLDIRRISTLKDRDEAIGNQVRVKVVKNKVAPPFKQVEFDIMFGEGVSKVGELIDLGVKAGIVEKSGAWFSYNSQRLGQGRENSKGFLRDNPKIAAEIEGSIRQNSGLVAEKILENAAPTADDLDEGEA</sequence>
<reference key="1">
    <citation type="submission" date="2008-03" db="EMBL/GenBank/DDBJ databases">
        <title>Complete sequence of chromosome of Methylobacterium radiotolerans JCM 2831.</title>
        <authorList>
            <consortium name="US DOE Joint Genome Institute"/>
            <person name="Copeland A."/>
            <person name="Lucas S."/>
            <person name="Lapidus A."/>
            <person name="Glavina del Rio T."/>
            <person name="Dalin E."/>
            <person name="Tice H."/>
            <person name="Bruce D."/>
            <person name="Goodwin L."/>
            <person name="Pitluck S."/>
            <person name="Kiss H."/>
            <person name="Brettin T."/>
            <person name="Detter J.C."/>
            <person name="Han C."/>
            <person name="Kuske C.R."/>
            <person name="Schmutz J."/>
            <person name="Larimer F."/>
            <person name="Land M."/>
            <person name="Hauser L."/>
            <person name="Kyrpides N."/>
            <person name="Mikhailova N."/>
            <person name="Marx C.J."/>
            <person name="Richardson P."/>
        </authorList>
    </citation>
    <scope>NUCLEOTIDE SEQUENCE [LARGE SCALE GENOMIC DNA]</scope>
    <source>
        <strain>ATCC 27329 / DSM 1819 / JCM 2831 / NBRC 15690 / NCIMB 10815 / 0-1</strain>
    </source>
</reference>
<evidence type="ECO:0000255" key="1">
    <source>
        <dbReference type="HAMAP-Rule" id="MF_00268"/>
    </source>
</evidence>
<comment type="function">
    <text evidence="1">Can catalyze the hydrolysis of ATP in the presence of single-stranded DNA, the ATP-dependent uptake of single-stranded DNA by duplex DNA, and the ATP-dependent hybridization of homologous single-stranded DNAs. It interacts with LexA causing its activation and leading to its autocatalytic cleavage.</text>
</comment>
<comment type="subcellular location">
    <subcellularLocation>
        <location evidence="1">Cytoplasm</location>
    </subcellularLocation>
</comment>
<comment type="similarity">
    <text evidence="1">Belongs to the RecA family.</text>
</comment>